<keyword id="KW-1185">Reference proteome</keyword>
<organism>
    <name type="scientific">Aquifex aeolicus (strain VF5)</name>
    <dbReference type="NCBI Taxonomy" id="224324"/>
    <lineage>
        <taxon>Bacteria</taxon>
        <taxon>Pseudomonadati</taxon>
        <taxon>Aquificota</taxon>
        <taxon>Aquificia</taxon>
        <taxon>Aquificales</taxon>
        <taxon>Aquificaceae</taxon>
        <taxon>Aquifex</taxon>
    </lineage>
</organism>
<dbReference type="EMBL" id="AE000657">
    <property type="protein sequence ID" value="AAC07219.1"/>
    <property type="molecule type" value="Genomic_DNA"/>
</dbReference>
<dbReference type="PIR" id="D70402">
    <property type="entry name" value="D70402"/>
</dbReference>
<dbReference type="RefSeq" id="NP_213811.1">
    <property type="nucleotide sequence ID" value="NC_000918.1"/>
</dbReference>
<dbReference type="RefSeq" id="WP_010880749.1">
    <property type="nucleotide sequence ID" value="NC_000918.1"/>
</dbReference>
<dbReference type="SMR" id="O67247"/>
<dbReference type="STRING" id="224324.aq_1187"/>
<dbReference type="EnsemblBacteria" id="AAC07219">
    <property type="protein sequence ID" value="AAC07219"/>
    <property type="gene ID" value="aq_1187"/>
</dbReference>
<dbReference type="KEGG" id="aae:aq_1187"/>
<dbReference type="HOGENOM" id="CLU_1591204_0_0_0"/>
<dbReference type="InParanoid" id="O67247"/>
<dbReference type="Proteomes" id="UP000000798">
    <property type="component" value="Chromosome"/>
</dbReference>
<feature type="chain" id="PRO_0000186908" description="Uncharacterized protein aq_1187">
    <location>
        <begin position="1"/>
        <end position="167"/>
    </location>
</feature>
<reference key="1">
    <citation type="journal article" date="1998" name="Nature">
        <title>The complete genome of the hyperthermophilic bacterium Aquifex aeolicus.</title>
        <authorList>
            <person name="Deckert G."/>
            <person name="Warren P.V."/>
            <person name="Gaasterland T."/>
            <person name="Young W.G."/>
            <person name="Lenox A.L."/>
            <person name="Graham D.E."/>
            <person name="Overbeek R."/>
            <person name="Snead M.A."/>
            <person name="Keller M."/>
            <person name="Aujay M."/>
            <person name="Huber R."/>
            <person name="Feldman R.A."/>
            <person name="Short J.M."/>
            <person name="Olsen G.J."/>
            <person name="Swanson R.V."/>
        </authorList>
    </citation>
    <scope>NUCLEOTIDE SEQUENCE [LARGE SCALE GENOMIC DNA]</scope>
    <source>
        <strain>VF5</strain>
    </source>
</reference>
<name>Y1187_AQUAE</name>
<proteinExistence type="predicted"/>
<protein>
    <recommendedName>
        <fullName>Uncharacterized protein aq_1187</fullName>
    </recommendedName>
</protein>
<sequence>MKLITQLLVLFGFVLPNGYEEDKAKLVNIYRELLKVEETLKKGQINSKVIDKLNALGYPIYQIYSKYKYTKERSEIDLKLYAYSKKLYKHYFFVKRSIFPKFVMMDAKRNKLPVCNVEVKGKEKKHLIVRIQHPENDEEIREVYEGTQLFFADRLGFESIDFRRCKE</sequence>
<gene>
    <name type="ordered locus">aq_1187</name>
</gene>
<accession>O67247</accession>